<gene>
    <name evidence="1" type="primary">atpE</name>
    <name type="ordered locus">AHA_4267</name>
</gene>
<dbReference type="EMBL" id="CP000462">
    <property type="protein sequence ID" value="ABK37785.1"/>
    <property type="molecule type" value="Genomic_DNA"/>
</dbReference>
<dbReference type="RefSeq" id="WP_005307205.1">
    <property type="nucleotide sequence ID" value="NC_008570.1"/>
</dbReference>
<dbReference type="RefSeq" id="YP_858684.1">
    <property type="nucleotide sequence ID" value="NC_008570.1"/>
</dbReference>
<dbReference type="SMR" id="A0KQY3"/>
<dbReference type="STRING" id="380703.AHA_4267"/>
<dbReference type="EnsemblBacteria" id="ABK37785">
    <property type="protein sequence ID" value="ABK37785"/>
    <property type="gene ID" value="AHA_4267"/>
</dbReference>
<dbReference type="GeneID" id="92809912"/>
<dbReference type="KEGG" id="aha:AHA_4267"/>
<dbReference type="PATRIC" id="fig|380703.7.peg.4217"/>
<dbReference type="eggNOG" id="ENOG5032S3K">
    <property type="taxonomic scope" value="Bacteria"/>
</dbReference>
<dbReference type="HOGENOM" id="CLU_148047_1_0_6"/>
<dbReference type="OrthoDB" id="9811659at2"/>
<dbReference type="PRO" id="PR:A0KQY3"/>
<dbReference type="Proteomes" id="UP000000756">
    <property type="component" value="Chromosome"/>
</dbReference>
<dbReference type="GO" id="GO:0005886">
    <property type="term" value="C:plasma membrane"/>
    <property type="evidence" value="ECO:0007669"/>
    <property type="project" value="UniProtKB-SubCell"/>
</dbReference>
<dbReference type="GO" id="GO:0045259">
    <property type="term" value="C:proton-transporting ATP synthase complex"/>
    <property type="evidence" value="ECO:0007669"/>
    <property type="project" value="UniProtKB-KW"/>
</dbReference>
<dbReference type="GO" id="GO:0033177">
    <property type="term" value="C:proton-transporting two-sector ATPase complex, proton-transporting domain"/>
    <property type="evidence" value="ECO:0007669"/>
    <property type="project" value="InterPro"/>
</dbReference>
<dbReference type="GO" id="GO:0008289">
    <property type="term" value="F:lipid binding"/>
    <property type="evidence" value="ECO:0007669"/>
    <property type="project" value="UniProtKB-KW"/>
</dbReference>
<dbReference type="GO" id="GO:0046933">
    <property type="term" value="F:proton-transporting ATP synthase activity, rotational mechanism"/>
    <property type="evidence" value="ECO:0007669"/>
    <property type="project" value="UniProtKB-UniRule"/>
</dbReference>
<dbReference type="CDD" id="cd18185">
    <property type="entry name" value="ATP-synt_Fo_c_ATPE"/>
    <property type="match status" value="1"/>
</dbReference>
<dbReference type="FunFam" id="1.20.20.10:FF:000002">
    <property type="entry name" value="ATP synthase subunit c"/>
    <property type="match status" value="1"/>
</dbReference>
<dbReference type="Gene3D" id="1.20.20.10">
    <property type="entry name" value="F1F0 ATP synthase subunit C"/>
    <property type="match status" value="1"/>
</dbReference>
<dbReference type="HAMAP" id="MF_01396">
    <property type="entry name" value="ATP_synth_c_bact"/>
    <property type="match status" value="1"/>
</dbReference>
<dbReference type="InterPro" id="IPR005953">
    <property type="entry name" value="ATP_synth_csu_bac/chlpt"/>
</dbReference>
<dbReference type="InterPro" id="IPR000454">
    <property type="entry name" value="ATP_synth_F0_csu"/>
</dbReference>
<dbReference type="InterPro" id="IPR020537">
    <property type="entry name" value="ATP_synth_F0_csu_DDCD_BS"/>
</dbReference>
<dbReference type="InterPro" id="IPR038662">
    <property type="entry name" value="ATP_synth_F0_csu_sf"/>
</dbReference>
<dbReference type="InterPro" id="IPR002379">
    <property type="entry name" value="ATPase_proteolipid_c-like_dom"/>
</dbReference>
<dbReference type="InterPro" id="IPR035921">
    <property type="entry name" value="F/V-ATP_Csub_sf"/>
</dbReference>
<dbReference type="NCBIfam" id="TIGR01260">
    <property type="entry name" value="ATP_synt_c"/>
    <property type="match status" value="1"/>
</dbReference>
<dbReference type="NCBIfam" id="NF005363">
    <property type="entry name" value="PRK06876.1"/>
    <property type="match status" value="1"/>
</dbReference>
<dbReference type="Pfam" id="PF00137">
    <property type="entry name" value="ATP-synt_C"/>
    <property type="match status" value="1"/>
</dbReference>
<dbReference type="PRINTS" id="PR00124">
    <property type="entry name" value="ATPASEC"/>
</dbReference>
<dbReference type="SUPFAM" id="SSF81333">
    <property type="entry name" value="F1F0 ATP synthase subunit C"/>
    <property type="match status" value="1"/>
</dbReference>
<dbReference type="PROSITE" id="PS00605">
    <property type="entry name" value="ATPASE_C"/>
    <property type="match status" value="1"/>
</dbReference>
<keyword id="KW-0066">ATP synthesis</keyword>
<keyword id="KW-0997">Cell inner membrane</keyword>
<keyword id="KW-1003">Cell membrane</keyword>
<keyword id="KW-0138">CF(0)</keyword>
<keyword id="KW-0375">Hydrogen ion transport</keyword>
<keyword id="KW-0406">Ion transport</keyword>
<keyword id="KW-0446">Lipid-binding</keyword>
<keyword id="KW-0472">Membrane</keyword>
<keyword id="KW-1185">Reference proteome</keyword>
<keyword id="KW-0812">Transmembrane</keyword>
<keyword id="KW-1133">Transmembrane helix</keyword>
<keyword id="KW-0813">Transport</keyword>
<protein>
    <recommendedName>
        <fullName evidence="1">ATP synthase subunit c</fullName>
    </recommendedName>
    <alternativeName>
        <fullName evidence="1">ATP synthase F(0) sector subunit c</fullName>
    </alternativeName>
    <alternativeName>
        <fullName evidence="1">F-type ATPase subunit c</fullName>
        <shortName evidence="1">F-ATPase subunit c</shortName>
    </alternativeName>
    <alternativeName>
        <fullName evidence="1">Lipid-binding protein</fullName>
    </alternativeName>
</protein>
<feature type="chain" id="PRO_1000184314" description="ATP synthase subunit c">
    <location>
        <begin position="1"/>
        <end position="80"/>
    </location>
</feature>
<feature type="transmembrane region" description="Helical" evidence="1">
    <location>
        <begin position="11"/>
        <end position="31"/>
    </location>
</feature>
<feature type="transmembrane region" description="Helical" evidence="1">
    <location>
        <begin position="53"/>
        <end position="73"/>
    </location>
</feature>
<feature type="site" description="Reversibly protonated during proton transport" evidence="1">
    <location>
        <position position="61"/>
    </location>
</feature>
<name>ATPL_AERHH</name>
<organism>
    <name type="scientific">Aeromonas hydrophila subsp. hydrophila (strain ATCC 7966 / DSM 30187 / BCRC 13018 / CCUG 14551 / JCM 1027 / KCTC 2358 / NCIMB 9240 / NCTC 8049)</name>
    <dbReference type="NCBI Taxonomy" id="380703"/>
    <lineage>
        <taxon>Bacteria</taxon>
        <taxon>Pseudomonadati</taxon>
        <taxon>Pseudomonadota</taxon>
        <taxon>Gammaproteobacteria</taxon>
        <taxon>Aeromonadales</taxon>
        <taxon>Aeromonadaceae</taxon>
        <taxon>Aeromonas</taxon>
    </lineage>
</organism>
<evidence type="ECO:0000255" key="1">
    <source>
        <dbReference type="HAMAP-Rule" id="MF_01396"/>
    </source>
</evidence>
<comment type="function">
    <text evidence="1">F(1)F(0) ATP synthase produces ATP from ADP in the presence of a proton or sodium gradient. F-type ATPases consist of two structural domains, F(1) containing the extramembraneous catalytic core and F(0) containing the membrane proton channel, linked together by a central stalk and a peripheral stalk. During catalysis, ATP synthesis in the catalytic domain of F(1) is coupled via a rotary mechanism of the central stalk subunits to proton translocation.</text>
</comment>
<comment type="function">
    <text evidence="1">Key component of the F(0) channel; it plays a direct role in translocation across the membrane. A homomeric c-ring of between 10-14 subunits forms the central stalk rotor element with the F(1) delta and epsilon subunits.</text>
</comment>
<comment type="subunit">
    <text evidence="1">F-type ATPases have 2 components, F(1) - the catalytic core - and F(0) - the membrane proton channel. F(1) has five subunits: alpha(3), beta(3), gamma(1), delta(1), epsilon(1). F(0) has three main subunits: a(1), b(2) and c(10-14). The alpha and beta chains form an alternating ring which encloses part of the gamma chain. F(1) is attached to F(0) by a central stalk formed by the gamma and epsilon chains, while a peripheral stalk is formed by the delta and b chains.</text>
</comment>
<comment type="subcellular location">
    <subcellularLocation>
        <location evidence="1">Cell inner membrane</location>
        <topology evidence="1">Multi-pass membrane protein</topology>
    </subcellularLocation>
</comment>
<comment type="similarity">
    <text evidence="1">Belongs to the ATPase C chain family.</text>
</comment>
<accession>A0KQY3</accession>
<reference key="1">
    <citation type="journal article" date="2006" name="J. Bacteriol.">
        <title>Genome sequence of Aeromonas hydrophila ATCC 7966T: jack of all trades.</title>
        <authorList>
            <person name="Seshadri R."/>
            <person name="Joseph S.W."/>
            <person name="Chopra A.K."/>
            <person name="Sha J."/>
            <person name="Shaw J."/>
            <person name="Graf J."/>
            <person name="Haft D.H."/>
            <person name="Wu M."/>
            <person name="Ren Q."/>
            <person name="Rosovitz M.J."/>
            <person name="Madupu R."/>
            <person name="Tallon L."/>
            <person name="Kim M."/>
            <person name="Jin S."/>
            <person name="Vuong H."/>
            <person name="Stine O.C."/>
            <person name="Ali A."/>
            <person name="Horneman A.J."/>
            <person name="Heidelberg J.F."/>
        </authorList>
    </citation>
    <scope>NUCLEOTIDE SEQUENCE [LARGE SCALE GENOMIC DNA]</scope>
    <source>
        <strain>ATCC 7966 / DSM 30187 / BCRC 13018 / CCUG 14551 / JCM 1027 / KCTC 2358 / NCIMB 9240 / NCTC 8049</strain>
    </source>
</reference>
<proteinExistence type="inferred from homology"/>
<sequence>MENLNMDLLYIAAAMMMGLAAIGASIGIGILGGKFLEGAARQPDLIPVLRTQFFIVMGLVDAIPMIAVGLGLYVMFAVAG</sequence>